<dbReference type="EC" id="7.-.-.-" evidence="1"/>
<dbReference type="EMBL" id="CP000950">
    <property type="protein sequence ID" value="ACA68295.1"/>
    <property type="molecule type" value="Genomic_DNA"/>
</dbReference>
<dbReference type="RefSeq" id="WP_012304075.1">
    <property type="nucleotide sequence ID" value="NZ_CP009792.1"/>
</dbReference>
<dbReference type="SMR" id="B1JKN4"/>
<dbReference type="KEGG" id="ypy:YPK_2008"/>
<dbReference type="PATRIC" id="fig|502800.11.peg.2685"/>
<dbReference type="GO" id="GO:0005886">
    <property type="term" value="C:plasma membrane"/>
    <property type="evidence" value="ECO:0007669"/>
    <property type="project" value="UniProtKB-SubCell"/>
</dbReference>
<dbReference type="GO" id="GO:0051539">
    <property type="term" value="F:4 iron, 4 sulfur cluster binding"/>
    <property type="evidence" value="ECO:0007669"/>
    <property type="project" value="UniProtKB-KW"/>
</dbReference>
<dbReference type="GO" id="GO:0009055">
    <property type="term" value="F:electron transfer activity"/>
    <property type="evidence" value="ECO:0007669"/>
    <property type="project" value="InterPro"/>
</dbReference>
<dbReference type="GO" id="GO:0046872">
    <property type="term" value="F:metal ion binding"/>
    <property type="evidence" value="ECO:0007669"/>
    <property type="project" value="UniProtKB-KW"/>
</dbReference>
<dbReference type="GO" id="GO:0022900">
    <property type="term" value="P:electron transport chain"/>
    <property type="evidence" value="ECO:0007669"/>
    <property type="project" value="UniProtKB-UniRule"/>
</dbReference>
<dbReference type="Gene3D" id="3.30.70.20">
    <property type="match status" value="1"/>
</dbReference>
<dbReference type="Gene3D" id="3.40.50.11540">
    <property type="entry name" value="NADH-ubiquinone oxidoreductase 51kDa subunit"/>
    <property type="match status" value="1"/>
</dbReference>
<dbReference type="HAMAP" id="MF_00461">
    <property type="entry name" value="RsxC_RnfC"/>
    <property type="match status" value="1"/>
</dbReference>
<dbReference type="InterPro" id="IPR017896">
    <property type="entry name" value="4Fe4S_Fe-S-bd"/>
</dbReference>
<dbReference type="InterPro" id="IPR017900">
    <property type="entry name" value="4Fe4S_Fe_S_CS"/>
</dbReference>
<dbReference type="InterPro" id="IPR010208">
    <property type="entry name" value="Ion_transpt_RnfC/RsxC"/>
</dbReference>
<dbReference type="InterPro" id="IPR011538">
    <property type="entry name" value="Nuo51_FMN-bd"/>
</dbReference>
<dbReference type="InterPro" id="IPR037225">
    <property type="entry name" value="Nuo51_FMN-bd_sf"/>
</dbReference>
<dbReference type="InterPro" id="IPR026902">
    <property type="entry name" value="RnfC_N"/>
</dbReference>
<dbReference type="InterPro" id="IPR019554">
    <property type="entry name" value="Soluble_ligand-bd"/>
</dbReference>
<dbReference type="NCBIfam" id="NF003454">
    <property type="entry name" value="PRK05035.1"/>
    <property type="match status" value="1"/>
</dbReference>
<dbReference type="NCBIfam" id="TIGR01945">
    <property type="entry name" value="rnfC"/>
    <property type="match status" value="1"/>
</dbReference>
<dbReference type="PANTHER" id="PTHR43034">
    <property type="entry name" value="ION-TRANSLOCATING OXIDOREDUCTASE COMPLEX SUBUNIT C"/>
    <property type="match status" value="1"/>
</dbReference>
<dbReference type="PANTHER" id="PTHR43034:SF2">
    <property type="entry name" value="ION-TRANSLOCATING OXIDOREDUCTASE COMPLEX SUBUNIT C"/>
    <property type="match status" value="1"/>
</dbReference>
<dbReference type="Pfam" id="PF01512">
    <property type="entry name" value="Complex1_51K"/>
    <property type="match status" value="1"/>
</dbReference>
<dbReference type="Pfam" id="PF12838">
    <property type="entry name" value="Fer4_7"/>
    <property type="match status" value="1"/>
</dbReference>
<dbReference type="Pfam" id="PF13375">
    <property type="entry name" value="RnfC_N"/>
    <property type="match status" value="1"/>
</dbReference>
<dbReference type="Pfam" id="PF10531">
    <property type="entry name" value="SLBB"/>
    <property type="match status" value="1"/>
</dbReference>
<dbReference type="SUPFAM" id="SSF46548">
    <property type="entry name" value="alpha-helical ferredoxin"/>
    <property type="match status" value="1"/>
</dbReference>
<dbReference type="SUPFAM" id="SSF142019">
    <property type="entry name" value="Nqo1 FMN-binding domain-like"/>
    <property type="match status" value="1"/>
</dbReference>
<dbReference type="PROSITE" id="PS00198">
    <property type="entry name" value="4FE4S_FER_1"/>
    <property type="match status" value="2"/>
</dbReference>
<dbReference type="PROSITE" id="PS51379">
    <property type="entry name" value="4FE4S_FER_2"/>
    <property type="match status" value="2"/>
</dbReference>
<evidence type="ECO:0000255" key="1">
    <source>
        <dbReference type="HAMAP-Rule" id="MF_00461"/>
    </source>
</evidence>
<protein>
    <recommendedName>
        <fullName evidence="1">Ion-translocating oxidoreductase complex subunit C</fullName>
        <ecNumber evidence="1">7.-.-.-</ecNumber>
    </recommendedName>
    <alternativeName>
        <fullName evidence="1">Rnf electron transport complex subunit C</fullName>
    </alternativeName>
</protein>
<keyword id="KW-0004">4Fe-4S</keyword>
<keyword id="KW-0997">Cell inner membrane</keyword>
<keyword id="KW-1003">Cell membrane</keyword>
<keyword id="KW-0249">Electron transport</keyword>
<keyword id="KW-0408">Iron</keyword>
<keyword id="KW-0411">Iron-sulfur</keyword>
<keyword id="KW-0472">Membrane</keyword>
<keyword id="KW-0479">Metal-binding</keyword>
<keyword id="KW-0677">Repeat</keyword>
<keyword id="KW-1278">Translocase</keyword>
<keyword id="KW-0813">Transport</keyword>
<feature type="chain" id="PRO_1000125372" description="Ion-translocating oxidoreductase complex subunit C">
    <location>
        <begin position="1"/>
        <end position="698"/>
    </location>
</feature>
<feature type="domain" description="4Fe-4S ferredoxin-type 1" evidence="1">
    <location>
        <begin position="366"/>
        <end position="397"/>
    </location>
</feature>
<feature type="domain" description="4Fe-4S ferredoxin-type 2" evidence="1">
    <location>
        <begin position="407"/>
        <end position="436"/>
    </location>
</feature>
<feature type="binding site" evidence="1">
    <location>
        <position position="377"/>
    </location>
    <ligand>
        <name>[4Fe-4S] cluster</name>
        <dbReference type="ChEBI" id="CHEBI:49883"/>
        <label>1</label>
    </ligand>
</feature>
<feature type="binding site" evidence="1">
    <location>
        <position position="380"/>
    </location>
    <ligand>
        <name>[4Fe-4S] cluster</name>
        <dbReference type="ChEBI" id="CHEBI:49883"/>
        <label>1</label>
    </ligand>
</feature>
<feature type="binding site" evidence="1">
    <location>
        <position position="383"/>
    </location>
    <ligand>
        <name>[4Fe-4S] cluster</name>
        <dbReference type="ChEBI" id="CHEBI:49883"/>
        <label>1</label>
    </ligand>
</feature>
<feature type="binding site" evidence="1">
    <location>
        <position position="387"/>
    </location>
    <ligand>
        <name>[4Fe-4S] cluster</name>
        <dbReference type="ChEBI" id="CHEBI:49883"/>
        <label>2</label>
    </ligand>
</feature>
<feature type="binding site" evidence="1">
    <location>
        <position position="416"/>
    </location>
    <ligand>
        <name>[4Fe-4S] cluster</name>
        <dbReference type="ChEBI" id="CHEBI:49883"/>
        <label>2</label>
    </ligand>
</feature>
<feature type="binding site" evidence="1">
    <location>
        <position position="419"/>
    </location>
    <ligand>
        <name>[4Fe-4S] cluster</name>
        <dbReference type="ChEBI" id="CHEBI:49883"/>
        <label>2</label>
    </ligand>
</feature>
<feature type="binding site" evidence="1">
    <location>
        <position position="422"/>
    </location>
    <ligand>
        <name>[4Fe-4S] cluster</name>
        <dbReference type="ChEBI" id="CHEBI:49883"/>
        <label>2</label>
    </ligand>
</feature>
<feature type="binding site" evidence="1">
    <location>
        <position position="426"/>
    </location>
    <ligand>
        <name>[4Fe-4S] cluster</name>
        <dbReference type="ChEBI" id="CHEBI:49883"/>
        <label>1</label>
    </ligand>
</feature>
<proteinExistence type="inferred from homology"/>
<reference key="1">
    <citation type="submission" date="2008-02" db="EMBL/GenBank/DDBJ databases">
        <title>Complete sequence of Yersinia pseudotuberculosis YPIII.</title>
        <authorList>
            <consortium name="US DOE Joint Genome Institute"/>
            <person name="Copeland A."/>
            <person name="Lucas S."/>
            <person name="Lapidus A."/>
            <person name="Glavina del Rio T."/>
            <person name="Dalin E."/>
            <person name="Tice H."/>
            <person name="Bruce D."/>
            <person name="Goodwin L."/>
            <person name="Pitluck S."/>
            <person name="Munk A.C."/>
            <person name="Brettin T."/>
            <person name="Detter J.C."/>
            <person name="Han C."/>
            <person name="Tapia R."/>
            <person name="Schmutz J."/>
            <person name="Larimer F."/>
            <person name="Land M."/>
            <person name="Hauser L."/>
            <person name="Challacombe J.F."/>
            <person name="Green L."/>
            <person name="Lindler L.E."/>
            <person name="Nikolich M.P."/>
            <person name="Richardson P."/>
        </authorList>
    </citation>
    <scope>NUCLEOTIDE SEQUENCE [LARGE SCALE GENOMIC DNA]</scope>
    <source>
        <strain>YPIII</strain>
    </source>
</reference>
<sequence length="698" mass="74988">MFKLFTARQHDKIWDFDGGIHPPEMKLQSSTVPMRIAPLPDQLIIPLQQHLGPEGELRVRAGEQVLKGQPLTVGRGRTVPVHAPTSGMITAIAPHTTAHPSGLAELCVHITPDGEDRWREQQPWADYRQRDKMALLDRIHQAGIAGLGGAGFPTASKLQGGLNGIITLIINAAECEPYITADDRLMQEHADEVITGIHILRHLLQPQQVLIGIEDNKPEAIAALQRALRGQDGIHLRVVPTKYPSGGAKQLTKILTGKEVPFGKHSSSIGVLMQNVGTVVAIKRAVIDDEPLIERVVTLTGDALSSPGNFWARIGTPVLYLLKLAGFKPQNPPMVIMGGPLMGFTLPSLDVPIVKISNCILAPAETEMGLSEPEQSCIRCGLCVDACPAGLLPQQLYWFSRGEEHEKARNHNLFDCIECGACAYVCPSNIPLVQYYRQEKAEIRALDQESARAAEAKARFEAKQARLAREKLARELRHKQAAVKLTDADQQTVDAAVSRLTRQSDGSESVINIPAGQLPDNSAVIAAREARKAQARARQAEKQQARSTEETTDVVDPRQAAVAAAIARVKAKKAAQVQHVTTDVAEAGSEAIAEDPRKAAVAAAIARVKAKKAVQAQHVTTDVAEAGSEAMAEDPRKAAVAAAIARVKAKKAAQAQHVTTDVAEAGSEAMAEDPRKAAVAAAIARVKAKKAAQAINPD</sequence>
<name>RNFC_YERPY</name>
<comment type="function">
    <text evidence="1">Part of a membrane-bound complex that couples electron transfer with translocation of ions across the membrane.</text>
</comment>
<comment type="cofactor">
    <cofactor evidence="1">
        <name>[4Fe-4S] cluster</name>
        <dbReference type="ChEBI" id="CHEBI:49883"/>
    </cofactor>
    <text evidence="1">Binds 2 [4Fe-4S] clusters per subunit.</text>
</comment>
<comment type="subunit">
    <text evidence="1">The complex is composed of six subunits: RnfA, RnfB, RnfC, RnfD, RnfE and RnfG.</text>
</comment>
<comment type="subcellular location">
    <subcellularLocation>
        <location evidence="1">Cell inner membrane</location>
        <topology evidence="1">Peripheral membrane protein</topology>
    </subcellularLocation>
</comment>
<comment type="similarity">
    <text evidence="1">Belongs to the 4Fe4S bacterial-type ferredoxin family. RnfC subfamily.</text>
</comment>
<gene>
    <name evidence="1" type="primary">rnfC</name>
    <name type="ordered locus">YPK_2008</name>
</gene>
<accession>B1JKN4</accession>
<organism>
    <name type="scientific">Yersinia pseudotuberculosis serotype O:3 (strain YPIII)</name>
    <dbReference type="NCBI Taxonomy" id="502800"/>
    <lineage>
        <taxon>Bacteria</taxon>
        <taxon>Pseudomonadati</taxon>
        <taxon>Pseudomonadota</taxon>
        <taxon>Gammaproteobacteria</taxon>
        <taxon>Enterobacterales</taxon>
        <taxon>Yersiniaceae</taxon>
        <taxon>Yersinia</taxon>
    </lineage>
</organism>